<name>HUTH_HALH5</name>
<comment type="catalytic activity">
    <reaction evidence="1">
        <text>L-histidine = trans-urocanate + NH4(+)</text>
        <dbReference type="Rhea" id="RHEA:21232"/>
        <dbReference type="ChEBI" id="CHEBI:17771"/>
        <dbReference type="ChEBI" id="CHEBI:28938"/>
        <dbReference type="ChEBI" id="CHEBI:57595"/>
        <dbReference type="EC" id="4.3.1.3"/>
    </reaction>
</comment>
<comment type="pathway">
    <text evidence="1">Amino-acid degradation; L-histidine degradation into L-glutamate; N-formimidoyl-L-glutamate from L-histidine: step 1/3.</text>
</comment>
<comment type="subcellular location">
    <subcellularLocation>
        <location evidence="1">Cytoplasm</location>
    </subcellularLocation>
</comment>
<comment type="PTM">
    <text evidence="1">Contains an active site 4-methylidene-imidazol-5-one (MIO), which is formed autocatalytically by cyclization and dehydration of residues Ala-Ser-Gly.</text>
</comment>
<comment type="similarity">
    <text evidence="1">Belongs to the PAL/histidase family.</text>
</comment>
<reference key="1">
    <citation type="journal article" date="2000" name="Nucleic Acids Res.">
        <title>Complete genome sequence of the alkaliphilic bacterium Bacillus halodurans and genomic sequence comparison with Bacillus subtilis.</title>
        <authorList>
            <person name="Takami H."/>
            <person name="Nakasone K."/>
            <person name="Takaki Y."/>
            <person name="Maeno G."/>
            <person name="Sasaki R."/>
            <person name="Masui N."/>
            <person name="Fuji F."/>
            <person name="Hirama C."/>
            <person name="Nakamura Y."/>
            <person name="Ogasawara N."/>
            <person name="Kuhara S."/>
            <person name="Horikoshi K."/>
        </authorList>
    </citation>
    <scope>NUCLEOTIDE SEQUENCE [LARGE SCALE GENOMIC DNA]</scope>
    <source>
        <strain>ATCC BAA-125 / DSM 18197 / FERM 7344 / JCM 9153 / C-125</strain>
    </source>
</reference>
<gene>
    <name evidence="1" type="primary">hutH</name>
    <name type="ordered locus">BH1982</name>
</gene>
<dbReference type="EC" id="4.3.1.3" evidence="1"/>
<dbReference type="EMBL" id="BA000004">
    <property type="protein sequence ID" value="BAB05701.1"/>
    <property type="molecule type" value="Genomic_DNA"/>
</dbReference>
<dbReference type="PIR" id="F83897">
    <property type="entry name" value="F83897"/>
</dbReference>
<dbReference type="SMR" id="Q9KBE6"/>
<dbReference type="STRING" id="272558.gene:10727880"/>
<dbReference type="KEGG" id="bha:BH1982"/>
<dbReference type="eggNOG" id="COG2986">
    <property type="taxonomic scope" value="Bacteria"/>
</dbReference>
<dbReference type="HOGENOM" id="CLU_014801_4_0_9"/>
<dbReference type="UniPathway" id="UPA00379">
    <property type="reaction ID" value="UER00549"/>
</dbReference>
<dbReference type="Proteomes" id="UP000001258">
    <property type="component" value="Chromosome"/>
</dbReference>
<dbReference type="GO" id="GO:0005737">
    <property type="term" value="C:cytoplasm"/>
    <property type="evidence" value="ECO:0007669"/>
    <property type="project" value="UniProtKB-SubCell"/>
</dbReference>
<dbReference type="GO" id="GO:0004397">
    <property type="term" value="F:histidine ammonia-lyase activity"/>
    <property type="evidence" value="ECO:0007669"/>
    <property type="project" value="UniProtKB-UniRule"/>
</dbReference>
<dbReference type="GO" id="GO:0019556">
    <property type="term" value="P:L-histidine catabolic process to glutamate and formamide"/>
    <property type="evidence" value="ECO:0007669"/>
    <property type="project" value="UniProtKB-UniPathway"/>
</dbReference>
<dbReference type="GO" id="GO:0019557">
    <property type="term" value="P:L-histidine catabolic process to glutamate and formate"/>
    <property type="evidence" value="ECO:0007669"/>
    <property type="project" value="UniProtKB-UniPathway"/>
</dbReference>
<dbReference type="CDD" id="cd00332">
    <property type="entry name" value="PAL-HAL"/>
    <property type="match status" value="1"/>
</dbReference>
<dbReference type="FunFam" id="1.10.275.10:FF:000008">
    <property type="entry name" value="Histidine ammonia-lyase"/>
    <property type="match status" value="1"/>
</dbReference>
<dbReference type="FunFam" id="1.20.200.10:FF:000003">
    <property type="entry name" value="Histidine ammonia-lyase"/>
    <property type="match status" value="1"/>
</dbReference>
<dbReference type="Gene3D" id="1.20.200.10">
    <property type="entry name" value="Fumarase/aspartase (Central domain)"/>
    <property type="match status" value="1"/>
</dbReference>
<dbReference type="Gene3D" id="1.10.275.10">
    <property type="entry name" value="Fumarase/aspartase (N-terminal domain)"/>
    <property type="match status" value="1"/>
</dbReference>
<dbReference type="HAMAP" id="MF_00229">
    <property type="entry name" value="His_ammonia_lyase"/>
    <property type="match status" value="1"/>
</dbReference>
<dbReference type="InterPro" id="IPR001106">
    <property type="entry name" value="Aromatic_Lyase"/>
</dbReference>
<dbReference type="InterPro" id="IPR024083">
    <property type="entry name" value="Fumarase/histidase_N"/>
</dbReference>
<dbReference type="InterPro" id="IPR005921">
    <property type="entry name" value="HutH"/>
</dbReference>
<dbReference type="InterPro" id="IPR008948">
    <property type="entry name" value="L-Aspartase-like"/>
</dbReference>
<dbReference type="InterPro" id="IPR022313">
    <property type="entry name" value="Phe/His_NH3-lyase_AS"/>
</dbReference>
<dbReference type="NCBIfam" id="TIGR01225">
    <property type="entry name" value="hutH"/>
    <property type="match status" value="1"/>
</dbReference>
<dbReference type="NCBIfam" id="NF006871">
    <property type="entry name" value="PRK09367.1"/>
    <property type="match status" value="1"/>
</dbReference>
<dbReference type="PANTHER" id="PTHR10362">
    <property type="entry name" value="HISTIDINE AMMONIA-LYASE"/>
    <property type="match status" value="1"/>
</dbReference>
<dbReference type="Pfam" id="PF00221">
    <property type="entry name" value="Lyase_aromatic"/>
    <property type="match status" value="1"/>
</dbReference>
<dbReference type="SUPFAM" id="SSF48557">
    <property type="entry name" value="L-aspartase-like"/>
    <property type="match status" value="1"/>
</dbReference>
<dbReference type="PROSITE" id="PS00488">
    <property type="entry name" value="PAL_HISTIDASE"/>
    <property type="match status" value="1"/>
</dbReference>
<organism>
    <name type="scientific">Halalkalibacterium halodurans (strain ATCC BAA-125 / DSM 18197 / FERM 7344 / JCM 9153 / C-125)</name>
    <name type="common">Bacillus halodurans</name>
    <dbReference type="NCBI Taxonomy" id="272558"/>
    <lineage>
        <taxon>Bacteria</taxon>
        <taxon>Bacillati</taxon>
        <taxon>Bacillota</taxon>
        <taxon>Bacilli</taxon>
        <taxon>Bacillales</taxon>
        <taxon>Bacillaceae</taxon>
        <taxon>Halalkalibacterium (ex Joshi et al. 2022)</taxon>
    </lineage>
</organism>
<proteinExistence type="inferred from homology"/>
<evidence type="ECO:0000255" key="1">
    <source>
        <dbReference type="HAMAP-Rule" id="MF_00229"/>
    </source>
</evidence>
<keyword id="KW-0963">Cytoplasm</keyword>
<keyword id="KW-0369">Histidine metabolism</keyword>
<keyword id="KW-0456">Lyase</keyword>
<keyword id="KW-1185">Reference proteome</keyword>
<feature type="chain" id="PRO_0000160988" description="Histidine ammonia-lyase">
    <location>
        <begin position="1"/>
        <end position="511"/>
    </location>
</feature>
<feature type="modified residue" description="2,3-didehydroalanine (Ser)" evidence="1">
    <location>
        <position position="145"/>
    </location>
</feature>
<feature type="cross-link" description="5-imidazolinone (Ala-Gly)" evidence="1">
    <location>
        <begin position="144"/>
        <end position="146"/>
    </location>
</feature>
<accession>Q9KBE6</accession>
<sequence>MTNLKLLDGRSLSLHDLHRIIYEGETVGASDESMEKVKQSRKAVEQIVADEKIIYGITTGFGKFSDIFIDPDDVENLQHNLIYSHACGVGSPFPETVSRTMLVLRANALLKGFSGVRPLVIERLLALVNANIHPVIPQQGSLGASGDLAPLSHLALVLLGEGEVFYKGTKTKASFALKEEEIEPITLTAKEGLALINGTQAMTAMGVIAYLEAEKLAFQSEIIASLTMEGLRGIIDAFDEQIHFARGYVEQVDVARRMESYLQDSQLTTRQGELRVQDAYSLRCIPQVHGATWQTLRYVKEKLEIEMNAATDNPLIFDNGQKVISGGNFHGQQIALAMDFLGIAMAELANISERRIERLVNPQLNDLPPFLSAAPGVQSGVMILQYCAASLVSENKTLAHPASVDSIPSSANQEDHVSMGTIGSRHAYQIIQNVRNVLAIELICAMQAVDIRGREKMASFTKKILEKGREHVPYIDQDRMFAKDIERAAKWLKDGSWDFTKMREKERTNHY</sequence>
<protein>
    <recommendedName>
        <fullName evidence="1">Histidine ammonia-lyase</fullName>
        <shortName evidence="1">Histidase</shortName>
        <ecNumber evidence="1">4.3.1.3</ecNumber>
    </recommendedName>
</protein>